<evidence type="ECO:0000250" key="1"/>
<evidence type="ECO:0000305" key="2"/>
<dbReference type="EC" id="1.8.1.-"/>
<dbReference type="EMBL" id="U92441">
    <property type="protein sequence ID" value="AAB51152.1"/>
    <property type="molecule type" value="Genomic_DNA"/>
</dbReference>
<dbReference type="EMBL" id="CP000253">
    <property type="protein sequence ID" value="ABD29530.1"/>
    <property type="molecule type" value="Genomic_DNA"/>
</dbReference>
<dbReference type="RefSeq" id="WP_000930486.1">
    <property type="nucleotide sequence ID" value="NZ_LS483365.1"/>
</dbReference>
<dbReference type="RefSeq" id="YP_498953.1">
    <property type="nucleotide sequence ID" value="NC_007795.1"/>
</dbReference>
<dbReference type="SMR" id="O05204"/>
<dbReference type="STRING" id="93061.SAOUHSC_00364"/>
<dbReference type="PaxDb" id="1280-SAXN108_0430"/>
<dbReference type="GeneID" id="3919783"/>
<dbReference type="KEGG" id="sao:SAOUHSC_00364"/>
<dbReference type="PATRIC" id="fig|93061.5.peg.334"/>
<dbReference type="eggNOG" id="COG3634">
    <property type="taxonomic scope" value="Bacteria"/>
</dbReference>
<dbReference type="HOGENOM" id="CLU_031864_4_2_9"/>
<dbReference type="OrthoDB" id="9806179at2"/>
<dbReference type="PRO" id="PR:O05204"/>
<dbReference type="Proteomes" id="UP000008816">
    <property type="component" value="Chromosome"/>
</dbReference>
<dbReference type="GO" id="GO:0005829">
    <property type="term" value="C:cytosol"/>
    <property type="evidence" value="ECO:0000318"/>
    <property type="project" value="GO_Central"/>
</dbReference>
<dbReference type="GO" id="GO:0050660">
    <property type="term" value="F:flavin adenine dinucleotide binding"/>
    <property type="evidence" value="ECO:0007669"/>
    <property type="project" value="InterPro"/>
</dbReference>
<dbReference type="GO" id="GO:0051287">
    <property type="term" value="F:NAD binding"/>
    <property type="evidence" value="ECO:0007669"/>
    <property type="project" value="InterPro"/>
</dbReference>
<dbReference type="GO" id="GO:0102039">
    <property type="term" value="F:NADH-dependent peroxiredoxin activity"/>
    <property type="evidence" value="ECO:0007669"/>
    <property type="project" value="InterPro"/>
</dbReference>
<dbReference type="GO" id="GO:0004791">
    <property type="term" value="F:thioredoxin-disulfide reductase (NADPH) activity"/>
    <property type="evidence" value="ECO:0000318"/>
    <property type="project" value="GO_Central"/>
</dbReference>
<dbReference type="GO" id="GO:0045454">
    <property type="term" value="P:cell redox homeostasis"/>
    <property type="evidence" value="ECO:0000318"/>
    <property type="project" value="GO_Central"/>
</dbReference>
<dbReference type="GO" id="GO:0000302">
    <property type="term" value="P:response to reactive oxygen species"/>
    <property type="evidence" value="ECO:0007669"/>
    <property type="project" value="InterPro"/>
</dbReference>
<dbReference type="CDD" id="cd03026">
    <property type="entry name" value="AhpF_NTD_C"/>
    <property type="match status" value="1"/>
</dbReference>
<dbReference type="CDD" id="cd02974">
    <property type="entry name" value="AhpF_NTD_N"/>
    <property type="match status" value="1"/>
</dbReference>
<dbReference type="FunFam" id="3.50.50.60:FF:000007">
    <property type="entry name" value="Alkyl hydroperoxide reductase, F subunit"/>
    <property type="match status" value="1"/>
</dbReference>
<dbReference type="Gene3D" id="3.40.30.80">
    <property type="match status" value="1"/>
</dbReference>
<dbReference type="Gene3D" id="3.50.50.60">
    <property type="entry name" value="FAD/NAD(P)-binding domain"/>
    <property type="match status" value="2"/>
</dbReference>
<dbReference type="InterPro" id="IPR044141">
    <property type="entry name" value="AhpF_NTD_C"/>
</dbReference>
<dbReference type="InterPro" id="IPR044142">
    <property type="entry name" value="AhpF_NTD_N"/>
</dbReference>
<dbReference type="InterPro" id="IPR012081">
    <property type="entry name" value="Alkyl_hydroperoxide_Rdtase_suF"/>
</dbReference>
<dbReference type="InterPro" id="IPR036188">
    <property type="entry name" value="FAD/NAD-bd_sf"/>
</dbReference>
<dbReference type="InterPro" id="IPR023753">
    <property type="entry name" value="FAD/NAD-binding_dom"/>
</dbReference>
<dbReference type="InterPro" id="IPR050097">
    <property type="entry name" value="Ferredoxin-NADP_redctase_2"/>
</dbReference>
<dbReference type="InterPro" id="IPR008255">
    <property type="entry name" value="Pyr_nucl-diS_OxRdtase_2_AS"/>
</dbReference>
<dbReference type="InterPro" id="IPR012336">
    <property type="entry name" value="Thioredoxin-like_fold"/>
</dbReference>
<dbReference type="InterPro" id="IPR036249">
    <property type="entry name" value="Thioredoxin-like_sf"/>
</dbReference>
<dbReference type="NCBIfam" id="TIGR03140">
    <property type="entry name" value="AhpF"/>
    <property type="match status" value="1"/>
</dbReference>
<dbReference type="PANTHER" id="PTHR48105">
    <property type="entry name" value="THIOREDOXIN REDUCTASE 1-RELATED-RELATED"/>
    <property type="match status" value="1"/>
</dbReference>
<dbReference type="Pfam" id="PF07992">
    <property type="entry name" value="Pyr_redox_2"/>
    <property type="match status" value="1"/>
</dbReference>
<dbReference type="Pfam" id="PF13192">
    <property type="entry name" value="Thioredoxin_3"/>
    <property type="match status" value="1"/>
</dbReference>
<dbReference type="PIRSF" id="PIRSF000238">
    <property type="entry name" value="AhpF"/>
    <property type="match status" value="1"/>
</dbReference>
<dbReference type="PRINTS" id="PR00368">
    <property type="entry name" value="FADPNR"/>
</dbReference>
<dbReference type="PRINTS" id="PR00469">
    <property type="entry name" value="PNDRDTASEII"/>
</dbReference>
<dbReference type="SUPFAM" id="SSF51905">
    <property type="entry name" value="FAD/NAD(P)-binding domain"/>
    <property type="match status" value="1"/>
</dbReference>
<dbReference type="SUPFAM" id="SSF52833">
    <property type="entry name" value="Thioredoxin-like"/>
    <property type="match status" value="2"/>
</dbReference>
<dbReference type="PROSITE" id="PS51354">
    <property type="entry name" value="GLUTAREDOXIN_2"/>
    <property type="match status" value="1"/>
</dbReference>
<dbReference type="PROSITE" id="PS00573">
    <property type="entry name" value="PYRIDINE_REDOX_2"/>
    <property type="match status" value="1"/>
</dbReference>
<protein>
    <recommendedName>
        <fullName>Alkyl hydroperoxide reductase subunit F</fullName>
        <ecNumber>1.8.1.-</ecNumber>
    </recommendedName>
</protein>
<reference key="1">
    <citation type="submission" date="1997-03" db="EMBL/GenBank/DDBJ databases">
        <authorList>
            <person name="Jones E.C."/>
            <person name="Francis K.P."/>
            <person name="Stewart G.S.A.B."/>
        </authorList>
    </citation>
    <scope>NUCLEOTIDE SEQUENCE [GENOMIC DNA]</scope>
</reference>
<reference key="2">
    <citation type="book" date="2006" name="Gram positive pathogens, 2nd edition">
        <title>The Staphylococcus aureus NCTC 8325 genome.</title>
        <editorList>
            <person name="Fischetti V."/>
            <person name="Novick R."/>
            <person name="Ferretti J."/>
            <person name="Portnoy D."/>
            <person name="Rood J."/>
        </editorList>
        <authorList>
            <person name="Gillaspy A.F."/>
            <person name="Worrell V."/>
            <person name="Orvis J."/>
            <person name="Roe B.A."/>
            <person name="Dyer D.W."/>
            <person name="Iandolo J.J."/>
        </authorList>
    </citation>
    <scope>NUCLEOTIDE SEQUENCE [LARGE SCALE GENOMIC DNA]</scope>
    <source>
        <strain>NCTC 8325 / PS 47</strain>
    </source>
</reference>
<name>AHPF_STAA8</name>
<accession>O05204</accession>
<accession>Q2G0Z7</accession>
<gene>
    <name type="primary">ahpF</name>
    <name type="ordered locus">SAOUHSC_00364</name>
</gene>
<sequence>MLNADLKQQLKQLLELMEGNVEFVASLGSDDKSKELKDLLTEITDMSPRLSLSEKSLKRTPSFSVNRPGEETGVTFAGIPLGHEFNSLVLAILQVSGRAPKEKQSIIDQIKKLEGSFHFETFISLTCQKCPDVVQALNLMSVINPNITHSMIDGAVFREESENIMAVPAVFLNGEEFGNGRMTIQDILSKLGSTADASEFENKEPYDVLIVGGGPASGSAAIYTARKGLRTGIVADRIGGQVNDTAGIENFITVKETTGSEFSSNLAAHIDQYDIDAMTGIRATDIEKTDEAIKVTLENGAVLESKTVIIATGAGWRKLNIPGEEQLINKGVAFCPHCDGPLFENKDVAVIGGGNSGVEAAIDLAGIVNHVTLFEFASELKADNVLQDRLRSLSNVDIKTNAKTTEVVGEDHVTGIRYEDMNTGEEHLLNLDGIFVQIGLLPNTSWLNDAVELNERGEIVIDRNNNTNVPGIFAAGDVTDQKNKQIIISMGAGANAALNAFDYIIRN</sequence>
<proteinExistence type="inferred from homology"/>
<comment type="function">
    <text evidence="1">Serves to protect the cell against DNA damage by alkyl hydroperoxides. It can use either NADH or NADPH as electron donor for direct reduction of redox dyes or of alkyl hydroperoxides when combined with the AhpC protein (By similarity).</text>
</comment>
<comment type="cofactor">
    <cofactor evidence="1">
        <name>FAD</name>
        <dbReference type="ChEBI" id="CHEBI:57692"/>
    </cofactor>
    <text evidence="1">Binds 1 FAD per subunit.</text>
</comment>
<comment type="subunit">
    <text evidence="1">Homodimer.</text>
</comment>
<comment type="miscellaneous">
    <text>The active site is a redox-active disulfide bond.</text>
</comment>
<comment type="similarity">
    <text evidence="2">Belongs to the class-II pyridine nucleotide-disulfide oxidoreductase family.</text>
</comment>
<keyword id="KW-1015">Disulfide bond</keyword>
<keyword id="KW-0274">FAD</keyword>
<keyword id="KW-0285">Flavoprotein</keyword>
<keyword id="KW-0520">NAD</keyword>
<keyword id="KW-0521">NADP</keyword>
<keyword id="KW-0560">Oxidoreductase</keyword>
<keyword id="KW-0676">Redox-active center</keyword>
<keyword id="KW-1185">Reference proteome</keyword>
<organism>
    <name type="scientific">Staphylococcus aureus (strain NCTC 8325 / PS 47)</name>
    <dbReference type="NCBI Taxonomy" id="93061"/>
    <lineage>
        <taxon>Bacteria</taxon>
        <taxon>Bacillati</taxon>
        <taxon>Bacillota</taxon>
        <taxon>Bacilli</taxon>
        <taxon>Bacillales</taxon>
        <taxon>Staphylococcaceae</taxon>
        <taxon>Staphylococcus</taxon>
    </lineage>
</organism>
<feature type="chain" id="PRO_0000166784" description="Alkyl hydroperoxide reductase subunit F">
    <location>
        <begin position="1"/>
        <end position="507"/>
    </location>
</feature>
<feature type="binding site" evidence="1">
    <location>
        <begin position="207"/>
        <end position="222"/>
    </location>
    <ligand>
        <name>FAD</name>
        <dbReference type="ChEBI" id="CHEBI:57692"/>
    </ligand>
</feature>
<feature type="binding site" evidence="1">
    <location>
        <begin position="347"/>
        <end position="361"/>
    </location>
    <ligand>
        <name>NAD(+)</name>
        <dbReference type="ChEBI" id="CHEBI:57540"/>
    </ligand>
</feature>
<feature type="binding site" evidence="1">
    <location>
        <begin position="467"/>
        <end position="477"/>
    </location>
    <ligand>
        <name>FAD</name>
        <dbReference type="ChEBI" id="CHEBI:57692"/>
    </ligand>
</feature>
<feature type="disulfide bond" description="Redox-active" evidence="1">
    <location>
        <begin position="335"/>
        <end position="338"/>
    </location>
</feature>